<keyword id="KW-0998">Cell outer membrane</keyword>
<keyword id="KW-0472">Membrane</keyword>
<keyword id="KW-0675">Receptor</keyword>
<keyword id="KW-0732">Signal</keyword>
<keyword id="KW-0798">TonB box</keyword>
<keyword id="KW-0812">Transmembrane</keyword>
<keyword id="KW-1134">Transmembrane beta strand</keyword>
<keyword id="KW-0813">Transport</keyword>
<accession>Q9JWA2</accession>
<accession>A1IPT4</accession>
<comment type="function">
    <text evidence="1">Acts as a receptor for hemoglobin or the hemoglobin/haptoglobin complex and is required for heme uptake.</text>
</comment>
<comment type="subcellular location">
    <subcellularLocation>
        <location evidence="3 4">Cell outer membrane</location>
        <topology evidence="3">Multi-pass membrane protein</topology>
    </subcellularLocation>
</comment>
<comment type="similarity">
    <text evidence="4">Belongs to the TonB-dependent receptor family.</text>
</comment>
<organism>
    <name type="scientific">Neisseria meningitidis serogroup A / serotype 4A (strain DSM 15465 / Z2491)</name>
    <dbReference type="NCBI Taxonomy" id="122587"/>
    <lineage>
        <taxon>Bacteria</taxon>
        <taxon>Pseudomonadati</taxon>
        <taxon>Pseudomonadota</taxon>
        <taxon>Betaproteobacteria</taxon>
        <taxon>Neisseriales</taxon>
        <taxon>Neisseriaceae</taxon>
        <taxon>Neisseria</taxon>
    </lineage>
</organism>
<sequence>MPIPFKPVLAAAAIAQAFPAFAADPAPQSAQTLNEITVTGTHKTQKLGEEKIRRKTLDKLLVNDEHDLVRYDPGISVVEGGRAGSNGFTIRGVDKDRVAINVDGLAQAESRSSEAFQELFGAYGNFNANRNTSEPENFSEVTITKGADSLKSGSGALGGAVNYQTKSASDYVSEDKPYHLGIKGGSVGKNSQKFSSITAAGRLFGLDALLVYTRRFGKETKNRSTEGDIEIKNDGYVYNPTDTGGPSKYLTYVATGVARSQPDPQEWVNKSTLFKLGYNFNDQNRIGWIFEDSRTDRFTNELSNLWTGTTTSAATGDYRHRQDVSYRRRSGVEYKNELEHGPWDSLKLRYDKQRIDMNTWTWDIPKNYDKRGINGEVYHSFRHIRQNTAQWTADFEKQLDFSKAVWAAQYGLGGGKGDNANSDYSYFAKLYDPKILASNQAKITMLIENRSKYKFAYWNNAFHLGGNDRFRLNAGIRYDKNSSSAKDDPKYTTAIRGQIPHLGSERAHAGFSYGTGFDWRFTKHLHLLAKYSTGFRAPTSDETWLLFPHPDFYLKANPNLKAEKAKNWELGLAGSGKAGNFKLSGFKTKYRDFIELTYMGVSSDDKNNPRYAPLSDGTALVSSPVWQNQNRSAAWVKGIEFNGTWNLDSIGLPKGLHTGLNVSYIKGKATQNNGKETPINALSPWTAVYSLGYDAPSKRWGINAYATRTAAKKPSDTVHSNDDLNNPWPYAKHSKAYTLFDLSAYLNIGKQVTLRAAAYNITNKQYYTWESLRSIREFGTVNRVDNKTHAGIQRFTSPGRSYNFTIEAKF</sequence>
<evidence type="ECO:0000250" key="1"/>
<evidence type="ECO:0000255" key="2"/>
<evidence type="ECO:0000255" key="3">
    <source>
        <dbReference type="PROSITE-ProRule" id="PRU01360"/>
    </source>
</evidence>
<evidence type="ECO:0000305" key="4"/>
<name>HPUB_NEIMA</name>
<feature type="signal peptide" evidence="2">
    <location>
        <begin position="1"/>
        <end position="22"/>
    </location>
</feature>
<feature type="chain" id="PRO_0000034760" description="Hemoglobin-haptoglobin utilization protein B">
    <location>
        <begin position="23"/>
        <end position="810"/>
    </location>
</feature>
<feature type="domain" description="TBDR plug" evidence="3">
    <location>
        <begin position="34"/>
        <end position="166"/>
    </location>
</feature>
<feature type="domain" description="TBDR beta-barrel" evidence="3">
    <location>
        <begin position="175"/>
        <end position="810"/>
    </location>
</feature>
<feature type="short sequence motif" description="TonB C-terminal box">
    <location>
        <begin position="793"/>
        <end position="810"/>
    </location>
</feature>
<dbReference type="EMBL" id="AL157959">
    <property type="protein sequence ID" value="CAM07755.1"/>
    <property type="molecule type" value="Genomic_DNA"/>
</dbReference>
<dbReference type="PIR" id="A81965">
    <property type="entry name" value="A81965"/>
</dbReference>
<dbReference type="RefSeq" id="WP_010981084.1">
    <property type="nucleotide sequence ID" value="NC_003116.1"/>
</dbReference>
<dbReference type="SMR" id="Q9JWA2"/>
<dbReference type="EnsemblBacteria" id="CAM07755">
    <property type="protein sequence ID" value="CAM07755"/>
    <property type="gene ID" value="NMA0474"/>
</dbReference>
<dbReference type="KEGG" id="nma:NMA0474"/>
<dbReference type="HOGENOM" id="CLU_008287_19_0_4"/>
<dbReference type="Proteomes" id="UP000000626">
    <property type="component" value="Chromosome"/>
</dbReference>
<dbReference type="GO" id="GO:0009279">
    <property type="term" value="C:cell outer membrane"/>
    <property type="evidence" value="ECO:0007669"/>
    <property type="project" value="UniProtKB-SubCell"/>
</dbReference>
<dbReference type="GO" id="GO:0015344">
    <property type="term" value="F:siderophore uptake transmembrane transporter activity"/>
    <property type="evidence" value="ECO:0007669"/>
    <property type="project" value="TreeGrafter"/>
</dbReference>
<dbReference type="CDD" id="cd01347">
    <property type="entry name" value="ligand_gated_channel"/>
    <property type="match status" value="1"/>
</dbReference>
<dbReference type="Gene3D" id="2.40.170.20">
    <property type="entry name" value="TonB-dependent receptor, beta-barrel domain"/>
    <property type="match status" value="1"/>
</dbReference>
<dbReference type="Gene3D" id="2.170.130.10">
    <property type="entry name" value="TonB-dependent receptor, plug domain"/>
    <property type="match status" value="1"/>
</dbReference>
<dbReference type="InterPro" id="IPR012910">
    <property type="entry name" value="Plug_dom"/>
</dbReference>
<dbReference type="InterPro" id="IPR037066">
    <property type="entry name" value="Plug_dom_sf"/>
</dbReference>
<dbReference type="InterPro" id="IPR039426">
    <property type="entry name" value="TonB-dep_rcpt-like"/>
</dbReference>
<dbReference type="InterPro" id="IPR000531">
    <property type="entry name" value="TonB-dep_rcpt_b-brl"/>
</dbReference>
<dbReference type="InterPro" id="IPR010949">
    <property type="entry name" value="TonB_Hb/transfer/lactofer_rcpt"/>
</dbReference>
<dbReference type="InterPro" id="IPR036942">
    <property type="entry name" value="TonB_rcpt_b-brl_sf"/>
</dbReference>
<dbReference type="InterPro" id="IPR010917">
    <property type="entry name" value="TonB_rcpt_CS"/>
</dbReference>
<dbReference type="NCBIfam" id="TIGR01786">
    <property type="entry name" value="TonB-hemlactrns"/>
    <property type="match status" value="1"/>
</dbReference>
<dbReference type="PANTHER" id="PTHR30069:SF29">
    <property type="entry name" value="HEMOGLOBIN AND HEMOGLOBIN-HAPTOGLOBIN-BINDING PROTEIN 1-RELATED"/>
    <property type="match status" value="1"/>
</dbReference>
<dbReference type="PANTHER" id="PTHR30069">
    <property type="entry name" value="TONB-DEPENDENT OUTER MEMBRANE RECEPTOR"/>
    <property type="match status" value="1"/>
</dbReference>
<dbReference type="Pfam" id="PF07715">
    <property type="entry name" value="Plug"/>
    <property type="match status" value="1"/>
</dbReference>
<dbReference type="Pfam" id="PF00593">
    <property type="entry name" value="TonB_dep_Rec_b-barrel"/>
    <property type="match status" value="1"/>
</dbReference>
<dbReference type="SUPFAM" id="SSF56935">
    <property type="entry name" value="Porins"/>
    <property type="match status" value="1"/>
</dbReference>
<dbReference type="PROSITE" id="PS01156">
    <property type="entry name" value="TONB_DEPENDENT_REC_2"/>
    <property type="match status" value="1"/>
</dbReference>
<dbReference type="PROSITE" id="PS52016">
    <property type="entry name" value="TONB_DEPENDENT_REC_3"/>
    <property type="match status" value="1"/>
</dbReference>
<gene>
    <name type="primary">hpuB</name>
    <name type="ordered locus">NMA0474</name>
</gene>
<protein>
    <recommendedName>
        <fullName>Hemoglobin-haptoglobin utilization protein B</fullName>
    </recommendedName>
</protein>
<proteinExistence type="inferred from homology"/>
<reference key="1">
    <citation type="journal article" date="2000" name="Nature">
        <title>Complete DNA sequence of a serogroup A strain of Neisseria meningitidis Z2491.</title>
        <authorList>
            <person name="Parkhill J."/>
            <person name="Achtman M."/>
            <person name="James K.D."/>
            <person name="Bentley S.D."/>
            <person name="Churcher C.M."/>
            <person name="Klee S.R."/>
            <person name="Morelli G."/>
            <person name="Basham D."/>
            <person name="Brown D."/>
            <person name="Chillingworth T."/>
            <person name="Davies R.M."/>
            <person name="Davis P."/>
            <person name="Devlin K."/>
            <person name="Feltwell T."/>
            <person name="Hamlin N."/>
            <person name="Holroyd S."/>
            <person name="Jagels K."/>
            <person name="Leather S."/>
            <person name="Moule S."/>
            <person name="Mungall K.L."/>
            <person name="Quail M.A."/>
            <person name="Rajandream M.A."/>
            <person name="Rutherford K.M."/>
            <person name="Simmonds M."/>
            <person name="Skelton J."/>
            <person name="Whitehead S."/>
            <person name="Spratt B.G."/>
            <person name="Barrell B.G."/>
        </authorList>
    </citation>
    <scope>NUCLEOTIDE SEQUENCE [LARGE SCALE GENOMIC DNA]</scope>
    <source>
        <strain>DSM 15465 / Z2491</strain>
    </source>
</reference>